<name>MNS3_ARATH</name>
<accession>Q93Y37</accession>
<accession>Q9C8R9</accession>
<comment type="function">
    <text evidence="6">Class I alpha-mannosidase essential for early N-glycan processing. Removes preferentially alpha-1,2-linked mannose residues from Man(9)GlcNAc(2) to produce Man(8)GlcNAc(2). Involved in root development and cell wall biosynthesis.</text>
</comment>
<comment type="catalytic activity">
    <reaction evidence="6">
        <text>N(4)-(alpha-D-Man-(1-&gt;2)-alpha-D-Man-(1-&gt;2)-alpha-D-Man-(1-&gt;3)-[alpha-D-Man-(1-&gt;2)-alpha-D-Man-(1-&gt;3)-[alpha-D-Man-(1-&gt;2)-alpha-D-Man-(1-&gt;6)]-alpha-D-Man-(1-&gt;6)]-beta-D-Man-(1-&gt;4)-beta-D-GlcNAc-(1-&gt;4)-beta-D-GlcNAc)-L-asparaginyl-[protein] (N-glucan mannose isomer 9A1,2,3B1,2,3) + 4 H2O = N(4)-(alpha-D-Man-(1-&gt;3)-[alpha-D-Man-(1-&gt;3)-[alpha-D-Man-(1-&gt;6)]-alpha-D-Man-(1-&gt;6)]-beta-D-Man-(1-&gt;4)-beta-D-GlcNAc-(1-&gt;4)-beta-D-GlcNAc)-L-asparaginyl-[protein] (N-glucan mannose isomer 5A1,2) + 4 beta-D-mannose</text>
        <dbReference type="Rhea" id="RHEA:56008"/>
        <dbReference type="Rhea" id="RHEA-COMP:14356"/>
        <dbReference type="Rhea" id="RHEA-COMP:14367"/>
        <dbReference type="ChEBI" id="CHEBI:15377"/>
        <dbReference type="ChEBI" id="CHEBI:28563"/>
        <dbReference type="ChEBI" id="CHEBI:59087"/>
        <dbReference type="ChEBI" id="CHEBI:139493"/>
        <dbReference type="EC" id="3.2.1.113"/>
    </reaction>
</comment>
<comment type="catalytic activity">
    <reaction evidence="6">
        <text>N(4)-(alpha-D-Man-(1-&gt;2)-alpha-D-Man-(1-&gt;2)-alpha-D-Man-(1-&gt;3)-[alpha-D-Man-(1-&gt;3)-[alpha-D-Man-(1-&gt;2)-alpha-D-Man-(1-&gt;6)]-alpha-D-Man-(1-&gt;6)]-beta-D-Man-(1-&gt;4)-beta-D-GlcNAc-(1-&gt;4)-beta-D-GlcNAc)-L-asparaginyl-[protein] (N-glucan mannose isomer 8A1,2,3B1,3) + 3 H2O = N(4)-(alpha-D-Man-(1-&gt;3)-[alpha-D-Man-(1-&gt;3)-[alpha-D-Man-(1-&gt;6)]-alpha-D-Man-(1-&gt;6)]-beta-D-Man-(1-&gt;4)-beta-D-GlcNAc-(1-&gt;4)-beta-D-GlcNAc)-L-asparaginyl-[protein] (N-glucan mannose isomer 5A1,2) + 3 beta-D-mannose</text>
        <dbReference type="Rhea" id="RHEA:56028"/>
        <dbReference type="Rhea" id="RHEA-COMP:14358"/>
        <dbReference type="Rhea" id="RHEA-COMP:14367"/>
        <dbReference type="ChEBI" id="CHEBI:15377"/>
        <dbReference type="ChEBI" id="CHEBI:28563"/>
        <dbReference type="ChEBI" id="CHEBI:59087"/>
        <dbReference type="ChEBI" id="CHEBI:60628"/>
        <dbReference type="EC" id="3.2.1.113"/>
    </reaction>
</comment>
<comment type="catalytic activity">
    <reaction evidence="6">
        <text>N(4)-(alpha-D-Man-(1-&gt;2)-alpha-D-Man-(1-&gt;2)-alpha-D-Man-(1-&gt;3)-[alpha-D-Man-(1-&gt;2)-alpha-D-Man-(1-&gt;3)-[alpha-D-Man-(1-&gt;2)-alpha-D-Man-(1-&gt;6)]-alpha-D-Man-(1-&gt;6)]-beta-D-Man-(1-&gt;4)-beta-D-GlcNAc-(1-&gt;4)-beta-D-GlcNAc)-L-asparaginyl-[protein] (N-glucan mannose isomer 9A1,2,3B1,2,3) + H2O = N(4)-(alpha-D-Man-(1-&gt;2)-alpha-D-Man-(1-&gt;2)-alpha-D-Man-(1-&gt;3)-[alpha-D-Man-(1-&gt;3)-[alpha-D-Man-(1-&gt;2)-alpha-D-Man-(1-&gt;6)]-alpha-D-Man-(1-&gt;6)]-beta-D-Man-(1-&gt;4)-beta-D-GlcNAc-(1-&gt;4)-beta-D-GlcNAc)-L-asparaginyl-[protein] (N-glucan mannose isomer 8A1,2,3B1,3) + beta-D-mannose</text>
        <dbReference type="Rhea" id="RHEA:56004"/>
        <dbReference type="Rhea" id="RHEA-COMP:14356"/>
        <dbReference type="Rhea" id="RHEA-COMP:14358"/>
        <dbReference type="ChEBI" id="CHEBI:15377"/>
        <dbReference type="ChEBI" id="CHEBI:28563"/>
        <dbReference type="ChEBI" id="CHEBI:60628"/>
        <dbReference type="ChEBI" id="CHEBI:139493"/>
        <dbReference type="EC" id="3.2.1.209"/>
    </reaction>
</comment>
<comment type="cofactor">
    <cofactor evidence="6">
        <name>Ca(2+)</name>
        <dbReference type="ChEBI" id="CHEBI:29108"/>
    </cofactor>
    <cofactor evidence="6">
        <name>Mn(2+)</name>
        <dbReference type="ChEBI" id="CHEBI:29035"/>
    </cofactor>
    <cofactor evidence="6">
        <name>Mg(2+)</name>
        <dbReference type="ChEBI" id="CHEBI:18420"/>
    </cofactor>
    <text evidence="6">Ca(2+) or Mn(2+). Mg(2+) can be used to a lesser extent.</text>
</comment>
<comment type="activity regulation">
    <text evidence="6">Inhibited by kifunensine and 1-deoxymannojirimycin, but not by swainsonine.</text>
</comment>
<comment type="pathway">
    <text evidence="7">Protein modification; protein glycosylation.</text>
</comment>
<comment type="subcellular location">
    <subcellularLocation>
        <location evidence="8">Golgi apparatus</location>
        <location evidence="8">cis-Golgi network membrane</location>
        <topology evidence="6">Single-pass type II membrane protein</topology>
    </subcellularLocation>
</comment>
<comment type="tissue specificity">
    <text evidence="6">Expressed in flowers, siliques, stems, leaves, roots, stamens and sepals.</text>
</comment>
<comment type="disruption phenotype">
    <text evidence="6">Formation of aberrant N-glycan structures.</text>
</comment>
<comment type="similarity">
    <text evidence="7">Belongs to the glycosyl hydrolase 47 family.</text>
</comment>
<comment type="sequence caution" evidence="7">
    <conflict type="erroneous gene model prediction">
        <sequence resource="EMBL-CDS" id="AAG52061"/>
    </conflict>
</comment>
<evidence type="ECO:0000250" key="1"/>
<evidence type="ECO:0000250" key="2">
    <source>
        <dbReference type="UniProtKB" id="P31723"/>
    </source>
</evidence>
<evidence type="ECO:0000250" key="3">
    <source>
        <dbReference type="UniProtKB" id="P32906"/>
    </source>
</evidence>
<evidence type="ECO:0000255" key="4"/>
<evidence type="ECO:0000256" key="5">
    <source>
        <dbReference type="SAM" id="MobiDB-lite"/>
    </source>
</evidence>
<evidence type="ECO:0000269" key="6">
    <source>
    </source>
</evidence>
<evidence type="ECO:0000305" key="7"/>
<evidence type="ECO:0000305" key="8">
    <source>
    </source>
</evidence>
<protein>
    <recommendedName>
        <fullName>Mannosyl-oligosaccharide 1,2-alpha-mannosidase MNS3</fullName>
        <ecNumber evidence="6">3.2.1.113</ecNumber>
        <ecNumber evidence="6">3.2.1.209</ecNumber>
    </recommendedName>
</protein>
<sequence length="624" mass="69069">MSKSLPYSVKDIHYDNAKFRHRSPLKVFSQSLLTLSTKRNYASCSTGKFLILILFFGVACLMLMSKSPNESGLNEKGKVTFVGGLRLGGLLRKPPRLPPRLSPDEGQLRGSSTNGSTISNSDPKWAARQQSVKEAFDHAWSGYRKYAMGYDELMPISQKGVDGLGGLGATVVDALDTAMIMGLDNIVSEAGSWVETHLLERISQKGQVNLFETTIRVLGGLLSAYHLSGGEQGTVNMTHVGPKPVIYLNIAKDLADRLLSAFTSSPTPVPFCDVILHESTAHPAPGGASSTAEVASVQLEFNYLSSISGDPKYSTEAMKVLAHIKTLPKTEGLVPIYISPQTGDFVGENIRLGSRGDSYYEYLIKVWLQQGAKLNSNFTYLHDMYIEAMKGVRHLLVQNSIPKGLVFVGELPYGSKGEFSPKMDHLVCFLPGTLALGATKGLTKEQALKENLLSFEDLENLKLAEDLAKTCFEMYEVTATGLAPEIAYFHTKDYTEDGLDGGNKSSMYANDIIIKPADRHNLLRPETVESLFVLYRITKDTKYRDQGWQIFEAFEKYTKVKSGGYTSLDDVTEVPPHRRDKMETFFLGETLKYLYLLFGDDSVIPLDKFVFNTEAHPLPIRRNT</sequence>
<proteinExistence type="evidence at protein level"/>
<dbReference type="EC" id="3.2.1.113" evidence="6"/>
<dbReference type="EC" id="3.2.1.209" evidence="6"/>
<dbReference type="EMBL" id="AC022455">
    <property type="protein sequence ID" value="AAG52061.1"/>
    <property type="status" value="ALT_SEQ"/>
    <property type="molecule type" value="Genomic_DNA"/>
</dbReference>
<dbReference type="EMBL" id="CP002684">
    <property type="protein sequence ID" value="AEE31166.1"/>
    <property type="molecule type" value="Genomic_DNA"/>
</dbReference>
<dbReference type="EMBL" id="AY054482">
    <property type="protein sequence ID" value="AAK96673.1"/>
    <property type="molecule type" value="mRNA"/>
</dbReference>
<dbReference type="EMBL" id="AY093280">
    <property type="protein sequence ID" value="AAM13279.1"/>
    <property type="molecule type" value="mRNA"/>
</dbReference>
<dbReference type="PIR" id="H86423">
    <property type="entry name" value="H86423"/>
</dbReference>
<dbReference type="RefSeq" id="NP_564345.1">
    <property type="nucleotide sequence ID" value="NM_102740.3"/>
</dbReference>
<dbReference type="SMR" id="Q93Y37"/>
<dbReference type="FunCoup" id="Q93Y37">
    <property type="interactions" value="4621"/>
</dbReference>
<dbReference type="STRING" id="3702.Q93Y37"/>
<dbReference type="CAZy" id="GH47">
    <property type="family name" value="Glycoside Hydrolase Family 47"/>
</dbReference>
<dbReference type="GlyCosmos" id="Q93Y37">
    <property type="glycosylation" value="5 sites, No reported glycans"/>
</dbReference>
<dbReference type="GlyGen" id="Q93Y37">
    <property type="glycosylation" value="6 sites"/>
</dbReference>
<dbReference type="SwissPalm" id="Q93Y37"/>
<dbReference type="PaxDb" id="3702-AT1G30000.1"/>
<dbReference type="ProteomicsDB" id="238294"/>
<dbReference type="EnsemblPlants" id="AT1G30000.1">
    <property type="protein sequence ID" value="AT1G30000.1"/>
    <property type="gene ID" value="AT1G30000"/>
</dbReference>
<dbReference type="GeneID" id="839879"/>
<dbReference type="Gramene" id="AT1G30000.1">
    <property type="protein sequence ID" value="AT1G30000.1"/>
    <property type="gene ID" value="AT1G30000"/>
</dbReference>
<dbReference type="KEGG" id="ath:AT1G30000"/>
<dbReference type="Araport" id="AT1G30000"/>
<dbReference type="TAIR" id="AT1G30000">
    <property type="gene designation" value="MNS3"/>
</dbReference>
<dbReference type="eggNOG" id="KOG2431">
    <property type="taxonomic scope" value="Eukaryota"/>
</dbReference>
<dbReference type="HOGENOM" id="CLU_003818_3_1_1"/>
<dbReference type="InParanoid" id="Q93Y37"/>
<dbReference type="OMA" id="AAFKHSW"/>
<dbReference type="OrthoDB" id="8118055at2759"/>
<dbReference type="PhylomeDB" id="Q93Y37"/>
<dbReference type="BRENDA" id="3.2.1.209">
    <property type="organism ID" value="399"/>
</dbReference>
<dbReference type="UniPathway" id="UPA00378"/>
<dbReference type="PRO" id="PR:Q93Y37"/>
<dbReference type="Proteomes" id="UP000006548">
    <property type="component" value="Chromosome 1"/>
</dbReference>
<dbReference type="ExpressionAtlas" id="Q93Y37">
    <property type="expression patterns" value="baseline and differential"/>
</dbReference>
<dbReference type="GO" id="GO:0005768">
    <property type="term" value="C:endosome"/>
    <property type="evidence" value="ECO:0007005"/>
    <property type="project" value="TAIR"/>
</dbReference>
<dbReference type="GO" id="GO:0005794">
    <property type="term" value="C:Golgi apparatus"/>
    <property type="evidence" value="ECO:0000314"/>
    <property type="project" value="TAIR"/>
</dbReference>
<dbReference type="GO" id="GO:0005797">
    <property type="term" value="C:Golgi medial cisterna"/>
    <property type="evidence" value="ECO:0007005"/>
    <property type="project" value="TAIR"/>
</dbReference>
<dbReference type="GO" id="GO:0016020">
    <property type="term" value="C:membrane"/>
    <property type="evidence" value="ECO:0007669"/>
    <property type="project" value="UniProtKB-KW"/>
</dbReference>
<dbReference type="GO" id="GO:0005802">
    <property type="term" value="C:trans-Golgi network"/>
    <property type="evidence" value="ECO:0007005"/>
    <property type="project" value="TAIR"/>
</dbReference>
<dbReference type="GO" id="GO:0004559">
    <property type="term" value="F:alpha-mannosidase activity"/>
    <property type="evidence" value="ECO:0000314"/>
    <property type="project" value="TAIR"/>
</dbReference>
<dbReference type="GO" id="GO:0005509">
    <property type="term" value="F:calcium ion binding"/>
    <property type="evidence" value="ECO:0007669"/>
    <property type="project" value="InterPro"/>
</dbReference>
<dbReference type="GO" id="GO:0004571">
    <property type="term" value="F:mannosyl-oligosaccharide 1,2-alpha-mannosidase activity"/>
    <property type="evidence" value="ECO:0007669"/>
    <property type="project" value="UniProtKB-EC"/>
</dbReference>
<dbReference type="GO" id="GO:0005975">
    <property type="term" value="P:carbohydrate metabolic process"/>
    <property type="evidence" value="ECO:0007669"/>
    <property type="project" value="InterPro"/>
</dbReference>
<dbReference type="GO" id="GO:0006491">
    <property type="term" value="P:N-glycan processing"/>
    <property type="evidence" value="ECO:0000315"/>
    <property type="project" value="TAIR"/>
</dbReference>
<dbReference type="GO" id="GO:0006486">
    <property type="term" value="P:protein glycosylation"/>
    <property type="evidence" value="ECO:0007669"/>
    <property type="project" value="UniProtKB-UniPathway"/>
</dbReference>
<dbReference type="FunFam" id="1.50.10.10:FF:000025">
    <property type="entry name" value="alpha-1,2-Mannosidase"/>
    <property type="match status" value="1"/>
</dbReference>
<dbReference type="Gene3D" id="1.50.10.10">
    <property type="match status" value="1"/>
</dbReference>
<dbReference type="InterPro" id="IPR012341">
    <property type="entry name" value="6hp_glycosidase-like_sf"/>
</dbReference>
<dbReference type="InterPro" id="IPR001382">
    <property type="entry name" value="Glyco_hydro_47"/>
</dbReference>
<dbReference type="InterPro" id="IPR050749">
    <property type="entry name" value="Glycosyl_Hydrolase_47"/>
</dbReference>
<dbReference type="InterPro" id="IPR036026">
    <property type="entry name" value="Seven-hairpin_glycosidases"/>
</dbReference>
<dbReference type="PANTHER" id="PTHR11742:SF55">
    <property type="entry name" value="ENDOPLASMIC RETICULUM MANNOSYL-OLIGOSACCHARIDE 1,2-ALPHA-MANNOSIDASE"/>
    <property type="match status" value="1"/>
</dbReference>
<dbReference type="PANTHER" id="PTHR11742">
    <property type="entry name" value="MANNOSYL-OLIGOSACCHARIDE ALPHA-1,2-MANNOSIDASE-RELATED"/>
    <property type="match status" value="1"/>
</dbReference>
<dbReference type="Pfam" id="PF01532">
    <property type="entry name" value="Glyco_hydro_47"/>
    <property type="match status" value="1"/>
</dbReference>
<dbReference type="PRINTS" id="PR00747">
    <property type="entry name" value="GLYHDRLASE47"/>
</dbReference>
<dbReference type="SUPFAM" id="SSF48225">
    <property type="entry name" value="Seven-hairpin glycosidases"/>
    <property type="match status" value="1"/>
</dbReference>
<reference key="1">
    <citation type="journal article" date="2000" name="Nature">
        <title>Sequence and analysis of chromosome 1 of the plant Arabidopsis thaliana.</title>
        <authorList>
            <person name="Theologis A."/>
            <person name="Ecker J.R."/>
            <person name="Palm C.J."/>
            <person name="Federspiel N.A."/>
            <person name="Kaul S."/>
            <person name="White O."/>
            <person name="Alonso J."/>
            <person name="Altafi H."/>
            <person name="Araujo R."/>
            <person name="Bowman C.L."/>
            <person name="Brooks S.Y."/>
            <person name="Buehler E."/>
            <person name="Chan A."/>
            <person name="Chao Q."/>
            <person name="Chen H."/>
            <person name="Cheuk R.F."/>
            <person name="Chin C.W."/>
            <person name="Chung M.K."/>
            <person name="Conn L."/>
            <person name="Conway A.B."/>
            <person name="Conway A.R."/>
            <person name="Creasy T.H."/>
            <person name="Dewar K."/>
            <person name="Dunn P."/>
            <person name="Etgu P."/>
            <person name="Feldblyum T.V."/>
            <person name="Feng J.-D."/>
            <person name="Fong B."/>
            <person name="Fujii C.Y."/>
            <person name="Gill J.E."/>
            <person name="Goldsmith A.D."/>
            <person name="Haas B."/>
            <person name="Hansen N.F."/>
            <person name="Hughes B."/>
            <person name="Huizar L."/>
            <person name="Hunter J.L."/>
            <person name="Jenkins J."/>
            <person name="Johnson-Hopson C."/>
            <person name="Khan S."/>
            <person name="Khaykin E."/>
            <person name="Kim C.J."/>
            <person name="Koo H.L."/>
            <person name="Kremenetskaia I."/>
            <person name="Kurtz D.B."/>
            <person name="Kwan A."/>
            <person name="Lam B."/>
            <person name="Langin-Hooper S."/>
            <person name="Lee A."/>
            <person name="Lee J.M."/>
            <person name="Lenz C.A."/>
            <person name="Li J.H."/>
            <person name="Li Y.-P."/>
            <person name="Lin X."/>
            <person name="Liu S.X."/>
            <person name="Liu Z.A."/>
            <person name="Luros J.S."/>
            <person name="Maiti R."/>
            <person name="Marziali A."/>
            <person name="Militscher J."/>
            <person name="Miranda M."/>
            <person name="Nguyen M."/>
            <person name="Nierman W.C."/>
            <person name="Osborne B.I."/>
            <person name="Pai G."/>
            <person name="Peterson J."/>
            <person name="Pham P.K."/>
            <person name="Rizzo M."/>
            <person name="Rooney T."/>
            <person name="Rowley D."/>
            <person name="Sakano H."/>
            <person name="Salzberg S.L."/>
            <person name="Schwartz J.R."/>
            <person name="Shinn P."/>
            <person name="Southwick A.M."/>
            <person name="Sun H."/>
            <person name="Tallon L.J."/>
            <person name="Tambunga G."/>
            <person name="Toriumi M.J."/>
            <person name="Town C.D."/>
            <person name="Utterback T."/>
            <person name="Van Aken S."/>
            <person name="Vaysberg M."/>
            <person name="Vysotskaia V.S."/>
            <person name="Walker M."/>
            <person name="Wu D."/>
            <person name="Yu G."/>
            <person name="Fraser C.M."/>
            <person name="Venter J.C."/>
            <person name="Davis R.W."/>
        </authorList>
    </citation>
    <scope>NUCLEOTIDE SEQUENCE [LARGE SCALE GENOMIC DNA]</scope>
    <source>
        <strain>cv. Columbia</strain>
    </source>
</reference>
<reference key="2">
    <citation type="journal article" date="2017" name="Plant J.">
        <title>Araport11: a complete reannotation of the Arabidopsis thaliana reference genome.</title>
        <authorList>
            <person name="Cheng C.Y."/>
            <person name="Krishnakumar V."/>
            <person name="Chan A.P."/>
            <person name="Thibaud-Nissen F."/>
            <person name="Schobel S."/>
            <person name="Town C.D."/>
        </authorList>
    </citation>
    <scope>GENOME REANNOTATION</scope>
    <source>
        <strain>cv. Columbia</strain>
    </source>
</reference>
<reference key="3">
    <citation type="journal article" date="2003" name="Science">
        <title>Empirical analysis of transcriptional activity in the Arabidopsis genome.</title>
        <authorList>
            <person name="Yamada K."/>
            <person name="Lim J."/>
            <person name="Dale J.M."/>
            <person name="Chen H."/>
            <person name="Shinn P."/>
            <person name="Palm C.J."/>
            <person name="Southwick A.M."/>
            <person name="Wu H.C."/>
            <person name="Kim C.J."/>
            <person name="Nguyen M."/>
            <person name="Pham P.K."/>
            <person name="Cheuk R.F."/>
            <person name="Karlin-Newmann G."/>
            <person name="Liu S.X."/>
            <person name="Lam B."/>
            <person name="Sakano H."/>
            <person name="Wu T."/>
            <person name="Yu G."/>
            <person name="Miranda M."/>
            <person name="Quach H.L."/>
            <person name="Tripp M."/>
            <person name="Chang C.H."/>
            <person name="Lee J.M."/>
            <person name="Toriumi M.J."/>
            <person name="Chan M.M."/>
            <person name="Tang C.C."/>
            <person name="Onodera C.S."/>
            <person name="Deng J.M."/>
            <person name="Akiyama K."/>
            <person name="Ansari Y."/>
            <person name="Arakawa T."/>
            <person name="Banh J."/>
            <person name="Banno F."/>
            <person name="Bowser L."/>
            <person name="Brooks S.Y."/>
            <person name="Carninci P."/>
            <person name="Chao Q."/>
            <person name="Choy N."/>
            <person name="Enju A."/>
            <person name="Goldsmith A.D."/>
            <person name="Gurjal M."/>
            <person name="Hansen N.F."/>
            <person name="Hayashizaki Y."/>
            <person name="Johnson-Hopson C."/>
            <person name="Hsuan V.W."/>
            <person name="Iida K."/>
            <person name="Karnes M."/>
            <person name="Khan S."/>
            <person name="Koesema E."/>
            <person name="Ishida J."/>
            <person name="Jiang P.X."/>
            <person name="Jones T."/>
            <person name="Kawai J."/>
            <person name="Kamiya A."/>
            <person name="Meyers C."/>
            <person name="Nakajima M."/>
            <person name="Narusaka M."/>
            <person name="Seki M."/>
            <person name="Sakurai T."/>
            <person name="Satou M."/>
            <person name="Tamse R."/>
            <person name="Vaysberg M."/>
            <person name="Wallender E.K."/>
            <person name="Wong C."/>
            <person name="Yamamura Y."/>
            <person name="Yuan S."/>
            <person name="Shinozaki K."/>
            <person name="Davis R.W."/>
            <person name="Theologis A."/>
            <person name="Ecker J.R."/>
        </authorList>
    </citation>
    <scope>NUCLEOTIDE SEQUENCE [LARGE SCALE MRNA]</scope>
    <source>
        <strain>cv. Columbia</strain>
    </source>
</reference>
<reference key="4">
    <citation type="journal article" date="2009" name="Plant Cell">
        <title>Class I alpha-mannosidases are required for N-glycan processing and root development in Arabidopsis thaliana.</title>
        <authorList>
            <person name="Liebminger E."/>
            <person name="Huttner S."/>
            <person name="Vavra U."/>
            <person name="Fischl R."/>
            <person name="Schoberer J."/>
            <person name="Grass J."/>
            <person name="Blaukopf C."/>
            <person name="Seifert G.J."/>
            <person name="Altmann F."/>
            <person name="Mach L."/>
            <person name="Strasser R."/>
        </authorList>
    </citation>
    <scope>FUNCTION</scope>
    <scope>CATALYTIC ACTIVITY</scope>
    <scope>TISSUE SPECIFICITY</scope>
    <scope>SUBCELLULAR LOCATION</scope>
    <scope>ACTIVITY REGULATION</scope>
    <scope>DISRUPTION PHENOTYPE</scope>
    <scope>COFACTOR</scope>
</reference>
<feature type="chain" id="PRO_0000397935" description="Mannosyl-oligosaccharide 1,2-alpha-mannosidase MNS3">
    <location>
        <begin position="1"/>
        <end position="624"/>
    </location>
</feature>
<feature type="topological domain" description="Cytoplasmic" evidence="4">
    <location>
        <begin position="1"/>
        <end position="43"/>
    </location>
</feature>
<feature type="transmembrane region" description="Helical; Signal-anchor for type II membrane protein" evidence="4">
    <location>
        <begin position="44"/>
        <end position="64"/>
    </location>
</feature>
<feature type="topological domain" description="Lumenal" evidence="4">
    <location>
        <begin position="65"/>
        <end position="624"/>
    </location>
</feature>
<feature type="region of interest" description="Disordered" evidence="5">
    <location>
        <begin position="91"/>
        <end position="123"/>
    </location>
</feature>
<feature type="compositionally biased region" description="Low complexity" evidence="5">
    <location>
        <begin position="110"/>
        <end position="121"/>
    </location>
</feature>
<feature type="active site" description="Proton donor" evidence="1">
    <location>
        <position position="212"/>
    </location>
</feature>
<feature type="active site" evidence="1">
    <location>
        <position position="357"/>
    </location>
</feature>
<feature type="active site" description="Proton donor" evidence="2">
    <location>
        <position position="485"/>
    </location>
</feature>
<feature type="active site" evidence="1">
    <location>
        <position position="526"/>
    </location>
</feature>
<feature type="binding site" evidence="3">
    <location>
        <position position="613"/>
    </location>
    <ligand>
        <name>Ca(2+)</name>
        <dbReference type="ChEBI" id="CHEBI:29108"/>
    </ligand>
</feature>
<feature type="glycosylation site" description="N-linked (GlcNAc...) asparagine" evidence="4">
    <location>
        <position position="69"/>
    </location>
</feature>
<feature type="glycosylation site" description="N-linked (GlcNAc...) asparagine" evidence="4">
    <location>
        <position position="114"/>
    </location>
</feature>
<feature type="glycosylation site" description="N-linked (GlcNAc...) asparagine" evidence="4">
    <location>
        <position position="236"/>
    </location>
</feature>
<feature type="glycosylation site" description="N-linked (GlcNAc...) asparagine" evidence="4">
    <location>
        <position position="377"/>
    </location>
</feature>
<feature type="glycosylation site" description="N-linked (GlcNAc...) asparagine" evidence="4">
    <location>
        <position position="503"/>
    </location>
</feature>
<feature type="disulfide bond" evidence="3">
    <location>
        <begin position="428"/>
        <end position="471"/>
    </location>
</feature>
<keyword id="KW-0106">Calcium</keyword>
<keyword id="KW-1015">Disulfide bond</keyword>
<keyword id="KW-0325">Glycoprotein</keyword>
<keyword id="KW-0333">Golgi apparatus</keyword>
<keyword id="KW-0378">Hydrolase</keyword>
<keyword id="KW-0460">Magnesium</keyword>
<keyword id="KW-0464">Manganese</keyword>
<keyword id="KW-0472">Membrane</keyword>
<keyword id="KW-0479">Metal-binding</keyword>
<keyword id="KW-1185">Reference proteome</keyword>
<keyword id="KW-0735">Signal-anchor</keyword>
<keyword id="KW-0812">Transmembrane</keyword>
<keyword id="KW-1133">Transmembrane helix</keyword>
<gene>
    <name type="primary">MNS3</name>
    <name type="ordered locus">At1g30000</name>
    <name type="ORF">T1P2.10</name>
</gene>
<organism>
    <name type="scientific">Arabidopsis thaliana</name>
    <name type="common">Mouse-ear cress</name>
    <dbReference type="NCBI Taxonomy" id="3702"/>
    <lineage>
        <taxon>Eukaryota</taxon>
        <taxon>Viridiplantae</taxon>
        <taxon>Streptophyta</taxon>
        <taxon>Embryophyta</taxon>
        <taxon>Tracheophyta</taxon>
        <taxon>Spermatophyta</taxon>
        <taxon>Magnoliopsida</taxon>
        <taxon>eudicotyledons</taxon>
        <taxon>Gunneridae</taxon>
        <taxon>Pentapetalae</taxon>
        <taxon>rosids</taxon>
        <taxon>malvids</taxon>
        <taxon>Brassicales</taxon>
        <taxon>Brassicaceae</taxon>
        <taxon>Camelineae</taxon>
        <taxon>Arabidopsis</taxon>
    </lineage>
</organism>